<sequence length="289" mass="33141">MYTVKENVSKEAIEEFLQSRKLTLDVPYQFSLGLFENSRLQGVLLYEDSLWESKVLQKKVMNVKLLAANSTGQLKRLFEAFYTVRQMDETDFIFVRVPAEDIGAAHVIQQQPSSYFVGSLLKLAMPPSFYDKTPPFFELGPPEPGDTEAICELARDSFTKSRYFQDPHLSRDAANEIFQEWTRNNLNGRAAVNIVAKHNGEVIGYLQGLSRDDECILDLMAVKPGFEGKRIAFHLLANLIEQPETQKHRTVTAGTQLHNVRAIRLYERMGFTAEQSYYYYHIWPGKEAK</sequence>
<accession>P39624</accession>
<dbReference type="EC" id="2.3.1.-"/>
<dbReference type="EMBL" id="X73124">
    <property type="protein sequence ID" value="CAA51622.1"/>
    <property type="molecule type" value="Genomic_DNA"/>
</dbReference>
<dbReference type="EMBL" id="AL009126">
    <property type="protein sequence ID" value="CAB15814.1"/>
    <property type="molecule type" value="Genomic_DNA"/>
</dbReference>
<dbReference type="PIR" id="S39721">
    <property type="entry name" value="S39721"/>
</dbReference>
<dbReference type="RefSeq" id="NP_391667.1">
    <property type="nucleotide sequence ID" value="NC_000964.3"/>
</dbReference>
<dbReference type="RefSeq" id="WP_003243179.1">
    <property type="nucleotide sequence ID" value="NZ_OZ025638.1"/>
</dbReference>
<dbReference type="SMR" id="P39624"/>
<dbReference type="FunCoup" id="P39624">
    <property type="interactions" value="42"/>
</dbReference>
<dbReference type="STRING" id="224308.BSU37880"/>
<dbReference type="PaxDb" id="224308-BSU37880"/>
<dbReference type="EnsemblBacteria" id="CAB15814">
    <property type="protein sequence ID" value="CAB15814"/>
    <property type="gene ID" value="BSU_37880"/>
</dbReference>
<dbReference type="GeneID" id="937250"/>
<dbReference type="KEGG" id="bsu:BSU37880"/>
<dbReference type="PATRIC" id="fig|224308.179.peg.4101"/>
<dbReference type="eggNOG" id="COG0456">
    <property type="taxonomic scope" value="Bacteria"/>
</dbReference>
<dbReference type="InParanoid" id="P39624"/>
<dbReference type="OrthoDB" id="9803233at2"/>
<dbReference type="BioCyc" id="BSUB:BSU37880-MONOMER"/>
<dbReference type="UniPathway" id="UPA00953"/>
<dbReference type="Proteomes" id="UP000001570">
    <property type="component" value="Chromosome"/>
</dbReference>
<dbReference type="GO" id="GO:0016747">
    <property type="term" value="F:acyltransferase activity, transferring groups other than amino-acyl groups"/>
    <property type="evidence" value="ECO:0000318"/>
    <property type="project" value="GO_Central"/>
</dbReference>
<dbReference type="CDD" id="cd04301">
    <property type="entry name" value="NAT_SF"/>
    <property type="match status" value="1"/>
</dbReference>
<dbReference type="Gene3D" id="3.40.630.30">
    <property type="match status" value="1"/>
</dbReference>
<dbReference type="InterPro" id="IPR016181">
    <property type="entry name" value="Acyl_CoA_acyltransferase"/>
</dbReference>
<dbReference type="InterPro" id="IPR000182">
    <property type="entry name" value="GNAT_dom"/>
</dbReference>
<dbReference type="InterPro" id="IPR050276">
    <property type="entry name" value="MshD_Acetyltransferase"/>
</dbReference>
<dbReference type="PANTHER" id="PTHR43617">
    <property type="entry name" value="L-AMINO ACID N-ACETYLTRANSFERASE"/>
    <property type="match status" value="1"/>
</dbReference>
<dbReference type="PANTHER" id="PTHR43617:SF33">
    <property type="entry name" value="SPORE COAT POLYSACCHARIDE BIOSYNTHESIS PROTEIN SPSD"/>
    <property type="match status" value="1"/>
</dbReference>
<dbReference type="Pfam" id="PF00583">
    <property type="entry name" value="Acetyltransf_1"/>
    <property type="match status" value="1"/>
</dbReference>
<dbReference type="SUPFAM" id="SSF55729">
    <property type="entry name" value="Acyl-CoA N-acyltransferases (Nat)"/>
    <property type="match status" value="1"/>
</dbReference>
<dbReference type="PROSITE" id="PS51186">
    <property type="entry name" value="GNAT"/>
    <property type="match status" value="1"/>
</dbReference>
<organism>
    <name type="scientific">Bacillus subtilis (strain 168)</name>
    <dbReference type="NCBI Taxonomy" id="224308"/>
    <lineage>
        <taxon>Bacteria</taxon>
        <taxon>Bacillati</taxon>
        <taxon>Bacillota</taxon>
        <taxon>Bacilli</taxon>
        <taxon>Bacillales</taxon>
        <taxon>Bacillaceae</taxon>
        <taxon>Bacillus</taxon>
    </lineage>
</organism>
<reference key="1">
    <citation type="journal article" date="1993" name="Mol. Microbiol.">
        <title>Bacillus subtilis genome project: cloning and sequencing of the 97 kb region from 325 degrees to 333 degrees.</title>
        <authorList>
            <person name="Glaser P."/>
            <person name="Kunst F."/>
            <person name="Arnaud M."/>
            <person name="Coudart M.P."/>
            <person name="Gonzales W."/>
            <person name="Hullo M.-F."/>
            <person name="Ionescu M."/>
            <person name="Lubochinsky B."/>
            <person name="Marcelino L."/>
            <person name="Moszer I."/>
            <person name="Presecan E."/>
            <person name="Santana M."/>
            <person name="Schneider E."/>
            <person name="Schweizer J."/>
            <person name="Vertes A."/>
            <person name="Rapoport G."/>
            <person name="Danchin A."/>
        </authorList>
    </citation>
    <scope>NUCLEOTIDE SEQUENCE [GENOMIC DNA]</scope>
    <source>
        <strain>168</strain>
    </source>
</reference>
<reference key="2">
    <citation type="journal article" date="1997" name="Nature">
        <title>The complete genome sequence of the Gram-positive bacterium Bacillus subtilis.</title>
        <authorList>
            <person name="Kunst F."/>
            <person name="Ogasawara N."/>
            <person name="Moszer I."/>
            <person name="Albertini A.M."/>
            <person name="Alloni G."/>
            <person name="Azevedo V."/>
            <person name="Bertero M.G."/>
            <person name="Bessieres P."/>
            <person name="Bolotin A."/>
            <person name="Borchert S."/>
            <person name="Borriss R."/>
            <person name="Boursier L."/>
            <person name="Brans A."/>
            <person name="Braun M."/>
            <person name="Brignell S.C."/>
            <person name="Bron S."/>
            <person name="Brouillet S."/>
            <person name="Bruschi C.V."/>
            <person name="Caldwell B."/>
            <person name="Capuano V."/>
            <person name="Carter N.M."/>
            <person name="Choi S.-K."/>
            <person name="Codani J.-J."/>
            <person name="Connerton I.F."/>
            <person name="Cummings N.J."/>
            <person name="Daniel R.A."/>
            <person name="Denizot F."/>
            <person name="Devine K.M."/>
            <person name="Duesterhoeft A."/>
            <person name="Ehrlich S.D."/>
            <person name="Emmerson P.T."/>
            <person name="Entian K.-D."/>
            <person name="Errington J."/>
            <person name="Fabret C."/>
            <person name="Ferrari E."/>
            <person name="Foulger D."/>
            <person name="Fritz C."/>
            <person name="Fujita M."/>
            <person name="Fujita Y."/>
            <person name="Fuma S."/>
            <person name="Galizzi A."/>
            <person name="Galleron N."/>
            <person name="Ghim S.-Y."/>
            <person name="Glaser P."/>
            <person name="Goffeau A."/>
            <person name="Golightly E.J."/>
            <person name="Grandi G."/>
            <person name="Guiseppi G."/>
            <person name="Guy B.J."/>
            <person name="Haga K."/>
            <person name="Haiech J."/>
            <person name="Harwood C.R."/>
            <person name="Henaut A."/>
            <person name="Hilbert H."/>
            <person name="Holsappel S."/>
            <person name="Hosono S."/>
            <person name="Hullo M.-F."/>
            <person name="Itaya M."/>
            <person name="Jones L.-M."/>
            <person name="Joris B."/>
            <person name="Karamata D."/>
            <person name="Kasahara Y."/>
            <person name="Klaerr-Blanchard M."/>
            <person name="Klein C."/>
            <person name="Kobayashi Y."/>
            <person name="Koetter P."/>
            <person name="Koningstein G."/>
            <person name="Krogh S."/>
            <person name="Kumano M."/>
            <person name="Kurita K."/>
            <person name="Lapidus A."/>
            <person name="Lardinois S."/>
            <person name="Lauber J."/>
            <person name="Lazarevic V."/>
            <person name="Lee S.-M."/>
            <person name="Levine A."/>
            <person name="Liu H."/>
            <person name="Masuda S."/>
            <person name="Mauel C."/>
            <person name="Medigue C."/>
            <person name="Medina N."/>
            <person name="Mellado R.P."/>
            <person name="Mizuno M."/>
            <person name="Moestl D."/>
            <person name="Nakai S."/>
            <person name="Noback M."/>
            <person name="Noone D."/>
            <person name="O'Reilly M."/>
            <person name="Ogawa K."/>
            <person name="Ogiwara A."/>
            <person name="Oudega B."/>
            <person name="Park S.-H."/>
            <person name="Parro V."/>
            <person name="Pohl T.M."/>
            <person name="Portetelle D."/>
            <person name="Porwollik S."/>
            <person name="Prescott A.M."/>
            <person name="Presecan E."/>
            <person name="Pujic P."/>
            <person name="Purnelle B."/>
            <person name="Rapoport G."/>
            <person name="Rey M."/>
            <person name="Reynolds S."/>
            <person name="Rieger M."/>
            <person name="Rivolta C."/>
            <person name="Rocha E."/>
            <person name="Roche B."/>
            <person name="Rose M."/>
            <person name="Sadaie Y."/>
            <person name="Sato T."/>
            <person name="Scanlan E."/>
            <person name="Schleich S."/>
            <person name="Schroeter R."/>
            <person name="Scoffone F."/>
            <person name="Sekiguchi J."/>
            <person name="Sekowska A."/>
            <person name="Seror S.J."/>
            <person name="Serror P."/>
            <person name="Shin B.-S."/>
            <person name="Soldo B."/>
            <person name="Sorokin A."/>
            <person name="Tacconi E."/>
            <person name="Takagi T."/>
            <person name="Takahashi H."/>
            <person name="Takemaru K."/>
            <person name="Takeuchi M."/>
            <person name="Tamakoshi A."/>
            <person name="Tanaka T."/>
            <person name="Terpstra P."/>
            <person name="Tognoni A."/>
            <person name="Tosato V."/>
            <person name="Uchiyama S."/>
            <person name="Vandenbol M."/>
            <person name="Vannier F."/>
            <person name="Vassarotti A."/>
            <person name="Viari A."/>
            <person name="Wambutt R."/>
            <person name="Wedler E."/>
            <person name="Wedler H."/>
            <person name="Weitzenegger T."/>
            <person name="Winters P."/>
            <person name="Wipat A."/>
            <person name="Yamamoto H."/>
            <person name="Yamane K."/>
            <person name="Yasumoto K."/>
            <person name="Yata K."/>
            <person name="Yoshida K."/>
            <person name="Yoshikawa H.-F."/>
            <person name="Zumstein E."/>
            <person name="Yoshikawa H."/>
            <person name="Danchin A."/>
        </authorList>
    </citation>
    <scope>NUCLEOTIDE SEQUENCE [LARGE SCALE GENOMIC DNA]</scope>
    <source>
        <strain>168</strain>
    </source>
</reference>
<protein>
    <recommendedName>
        <fullName>Spore coat polysaccharide biosynthesis protein SpsD</fullName>
        <ecNumber>2.3.1.-</ecNumber>
    </recommendedName>
</protein>
<comment type="pathway">
    <text>Spore coat biogenesis; spore coat polysaccharide biosynthesis.</text>
</comment>
<proteinExistence type="predicted"/>
<name>SPSD_BACSU</name>
<evidence type="ECO:0000255" key="1">
    <source>
        <dbReference type="PROSITE-ProRule" id="PRU00532"/>
    </source>
</evidence>
<feature type="chain" id="PRO_0000072156" description="Spore coat polysaccharide biosynthesis protein SpsD">
    <location>
        <begin position="1"/>
        <end position="289"/>
    </location>
</feature>
<feature type="domain" description="N-acetyltransferase" evidence="1">
    <location>
        <begin position="137"/>
        <end position="289"/>
    </location>
</feature>
<gene>
    <name type="primary">spsD</name>
    <name type="ordered locus">BSU37880</name>
    <name type="ORF">ipa-66d</name>
</gene>
<keyword id="KW-0012">Acyltransferase</keyword>
<keyword id="KW-1185">Reference proteome</keyword>
<keyword id="KW-0808">Transferase</keyword>